<protein>
    <recommendedName>
        <fullName evidence="4">Probable ethanolamine permease EutH</fullName>
    </recommendedName>
    <alternativeName>
        <fullName>Ethanolamine utilization protein EutH</fullName>
    </alternativeName>
</protein>
<proteinExistence type="inferred from homology"/>
<comment type="function">
    <text evidence="1 3">Probably involved in the diffusion of protonated ethanolamine (EA) into the cell at low pH. At low pH most EA is protonated, and this permease becomes necessary (By similarity). Contributes to bacterial survival and replication in acidic macrophage vacuoles, but not to bacterial uptake by macrophages (PubMed:29531136).</text>
</comment>
<comment type="catalytic activity">
    <reaction evidence="1">
        <text>ethanolamine(in) = ethanolamine(out)</text>
        <dbReference type="Rhea" id="RHEA:32747"/>
        <dbReference type="ChEBI" id="CHEBI:57603"/>
    </reaction>
</comment>
<comment type="subcellular location">
    <subcellularLocation>
        <location evidence="2">Cell membrane</location>
        <topology evidence="2">Multi-pass membrane protein</topology>
    </subcellularLocation>
</comment>
<comment type="disruption phenotype">
    <text evidence="3">Decrease in mouse macrophage survival 2-5 hours after infection.</text>
</comment>
<comment type="similarity">
    <text evidence="5">Belongs to the EutH family.</text>
</comment>
<evidence type="ECO:0000250" key="1">
    <source>
        <dbReference type="UniProtKB" id="P41796"/>
    </source>
</evidence>
<evidence type="ECO:0000255" key="2"/>
<evidence type="ECO:0000269" key="3">
    <source>
    </source>
</evidence>
<evidence type="ECO:0000303" key="4">
    <source>
    </source>
</evidence>
<evidence type="ECO:0000305" key="5"/>
<dbReference type="EMBL" id="CP002002">
    <property type="protein sequence ID" value="AEO06169.1"/>
    <property type="molecule type" value="Genomic_DNA"/>
</dbReference>
<dbReference type="RefSeq" id="WP_003721584.1">
    <property type="nucleotide sequence ID" value="NC_017544.1"/>
</dbReference>
<dbReference type="KEGG" id="lmt:LMRG_00632"/>
<dbReference type="HOGENOM" id="CLU_061142_0_0_9"/>
<dbReference type="Proteomes" id="UP000001288">
    <property type="component" value="Chromosome"/>
</dbReference>
<dbReference type="GO" id="GO:0005886">
    <property type="term" value="C:plasma membrane"/>
    <property type="evidence" value="ECO:0007669"/>
    <property type="project" value="UniProtKB-SubCell"/>
</dbReference>
<dbReference type="GO" id="GO:0034228">
    <property type="term" value="F:ethanolamine transmembrane transporter activity"/>
    <property type="evidence" value="ECO:0007669"/>
    <property type="project" value="InterPro"/>
</dbReference>
<dbReference type="InterPro" id="IPR007441">
    <property type="entry name" value="EutH"/>
</dbReference>
<dbReference type="NCBIfam" id="NF011666">
    <property type="entry name" value="PRK15086.1-2"/>
    <property type="match status" value="1"/>
</dbReference>
<dbReference type="NCBIfam" id="NF011667">
    <property type="entry name" value="PRK15086.1-3"/>
    <property type="match status" value="1"/>
</dbReference>
<dbReference type="PANTHER" id="PTHR40089:SF1">
    <property type="entry name" value="ETHANOLAMINE PERMEASE EUTH-RELATED"/>
    <property type="match status" value="1"/>
</dbReference>
<dbReference type="PANTHER" id="PTHR40089">
    <property type="entry name" value="ETHANOLAMINE UTILIZATION PROTEIN EUTH"/>
    <property type="match status" value="1"/>
</dbReference>
<dbReference type="Pfam" id="PF04346">
    <property type="entry name" value="EutH"/>
    <property type="match status" value="1"/>
</dbReference>
<dbReference type="PIRSF" id="PIRSF019466">
    <property type="entry name" value="EutH"/>
    <property type="match status" value="1"/>
</dbReference>
<name>EUTH_LISM4</name>
<feature type="chain" id="PRO_0000452916" description="Probable ethanolamine permease EutH">
    <location>
        <begin position="1"/>
        <end position="373"/>
    </location>
</feature>
<feature type="transmembrane region" description="Helical" evidence="2">
    <location>
        <begin position="5"/>
        <end position="25"/>
    </location>
</feature>
<feature type="transmembrane region" description="Helical" evidence="2">
    <location>
        <begin position="38"/>
        <end position="58"/>
    </location>
</feature>
<feature type="transmembrane region" description="Helical" evidence="2">
    <location>
        <begin position="61"/>
        <end position="81"/>
    </location>
</feature>
<feature type="transmembrane region" description="Helical" evidence="2">
    <location>
        <begin position="111"/>
        <end position="131"/>
    </location>
</feature>
<feature type="transmembrane region" description="Helical" evidence="2">
    <location>
        <begin position="143"/>
        <end position="163"/>
    </location>
</feature>
<feature type="transmembrane region" description="Helical" evidence="2">
    <location>
        <begin position="166"/>
        <end position="186"/>
    </location>
</feature>
<feature type="transmembrane region" description="Helical" evidence="2">
    <location>
        <begin position="197"/>
        <end position="217"/>
    </location>
</feature>
<feature type="transmembrane region" description="Helical" evidence="2">
    <location>
        <begin position="236"/>
        <end position="256"/>
    </location>
</feature>
<feature type="transmembrane region" description="Helical" evidence="2">
    <location>
        <begin position="307"/>
        <end position="327"/>
    </location>
</feature>
<feature type="transmembrane region" description="Helical" evidence="2">
    <location>
        <begin position="331"/>
        <end position="351"/>
    </location>
</feature>
<keyword id="KW-1003">Cell membrane</keyword>
<keyword id="KW-0472">Membrane</keyword>
<keyword id="KW-0812">Transmembrane</keyword>
<keyword id="KW-1133">Transmembrane helix</keyword>
<keyword id="KW-0813">Transport</keyword>
<keyword id="KW-0843">Virulence</keyword>
<accession>A0A0H3GFN0</accession>
<sequence length="373" mass="38711">MSINEIIIYLMVIFMILGAIDKIIGNKFGLGAQFEEGIMAMGSLTLAMVGIITLAPVLAKILSPIVVPIYTALGADPAMFATTLLANDMGGFALAQELALTPDAGLFAGAILGSMMGPTIVFTIPVALGIIKKEDHKYLATGVLSGIITIPIGCLIGGLVAGFSPIMIFKNLVPIILVAALIMLGLWFKPEGMIKGFTIFGKGVVIVATIGLVAGAIQQLTGLTIIPGIAPIGEGIEIVGGIALVLAGAFCLVFVITKVFNKPLMKMGKLLGMNEVAAAGMVATLANSIPMFQMLKDMDERGKIINVAFAVSAAFVLGDHLGFTAGVAQDMIFPMIVGKLVGGVTAVAVGIYMANRMMKKNKAKEQTAVKDNG</sequence>
<reference key="1">
    <citation type="submission" date="2010-04" db="EMBL/GenBank/DDBJ databases">
        <title>The genome sequence of Listeria monocytogenes strain 10403S.</title>
        <authorList>
            <consortium name="The Broad Institute Genome Sequencing Platform"/>
            <consortium name="The Broad Institute Genome Sequencing Center for Infectious Disease"/>
            <person name="Borowsky M."/>
            <person name="Borodovsky M."/>
            <person name="Young S.K."/>
            <person name="Zeng Q."/>
            <person name="Koehrsen M."/>
            <person name="Fitzgerald M."/>
            <person name="Wiedmann M."/>
            <person name="Swaminathan B."/>
            <person name="Lauer P."/>
            <person name="Portnoy D."/>
            <person name="Cossart P."/>
            <person name="Buchrieser C."/>
            <person name="Higgins D."/>
            <person name="Abouelleil A."/>
            <person name="Alvarado L."/>
            <person name="Arachchi H.M."/>
            <person name="Berlin A."/>
            <person name="Borenstein D."/>
            <person name="Brown A."/>
            <person name="Chapman S.B."/>
            <person name="Chen Z."/>
            <person name="Dunbar C.D."/>
            <person name="Engels R."/>
            <person name="Freedman E."/>
            <person name="Gearin G."/>
            <person name="Gellesch M."/>
            <person name="Goldberg J."/>
            <person name="Griggs A."/>
            <person name="Gujja S."/>
            <person name="Heilman E."/>
            <person name="Heiman D."/>
            <person name="Howarth C."/>
            <person name="Jen D."/>
            <person name="Larson L."/>
            <person name="Lui A."/>
            <person name="MacDonald J."/>
            <person name="Mehta T."/>
            <person name="Montmayeur A."/>
            <person name="Neiman D."/>
            <person name="Park D."/>
            <person name="Pearson M."/>
            <person name="Priest M."/>
            <person name="Richards J."/>
            <person name="Roberts A."/>
            <person name="Saif S."/>
            <person name="Shea T."/>
            <person name="Shenoy N."/>
            <person name="Sisk P."/>
            <person name="Stolte C."/>
            <person name="Sykes S."/>
            <person name="Walk T."/>
            <person name="White J."/>
            <person name="Yandava C."/>
            <person name="Haas B."/>
            <person name="Nusbaum C."/>
            <person name="Birren B."/>
        </authorList>
    </citation>
    <scope>NUCLEOTIDE SEQUENCE [LARGE SCALE GENOMIC DNA]</scope>
    <source>
        <strain>10403S</strain>
    </source>
</reference>
<reference key="2">
    <citation type="journal article" date="2018" name="Infect. Immun.">
        <title>The Ethanolamine Permease EutH Promotes Vacuole Adaptation of Salmonella enterica and Listeria monocytogenes during Macrophage Infection.</title>
        <authorList>
            <person name="Anderson C.J."/>
            <person name="Satkovich J."/>
            <person name="Koeseoglu V.K."/>
            <person name="Agaisse H."/>
            <person name="Kendall M.M."/>
        </authorList>
    </citation>
    <scope>FUNCTION</scope>
    <scope>DISRUPTION PHENOTYPE</scope>
    <source>
        <strain>10403S</strain>
    </source>
</reference>
<organism>
    <name type="scientific">Listeria monocytogenes serotype 1/2a (strain 10403S)</name>
    <dbReference type="NCBI Taxonomy" id="393133"/>
    <lineage>
        <taxon>Bacteria</taxon>
        <taxon>Bacillati</taxon>
        <taxon>Bacillota</taxon>
        <taxon>Bacilli</taxon>
        <taxon>Bacillales</taxon>
        <taxon>Listeriaceae</taxon>
        <taxon>Listeria</taxon>
    </lineage>
</organism>
<gene>
    <name evidence="4" type="primary">eutH</name>
    <name type="ordered locus">LMRG_00632</name>
</gene>